<dbReference type="EMBL" id="CM000071">
    <property type="protein sequence ID" value="EAL26665.1"/>
    <property type="molecule type" value="Genomic_DNA"/>
</dbReference>
<dbReference type="EMBL" id="AF025796">
    <property type="protein sequence ID" value="AAB87881.1"/>
    <property type="molecule type" value="mRNA"/>
</dbReference>
<dbReference type="SMR" id="O44091"/>
<dbReference type="FunCoup" id="O44091">
    <property type="interactions" value="1415"/>
</dbReference>
<dbReference type="STRING" id="46245.O44091"/>
<dbReference type="EnsemblMetazoa" id="FBtr0280388">
    <property type="protein sequence ID" value="FBpp0278826"/>
    <property type="gene ID" value="FBgn0023293"/>
</dbReference>
<dbReference type="GeneID" id="4805737"/>
<dbReference type="KEGG" id="dpo:4805737"/>
<dbReference type="CTD" id="36731"/>
<dbReference type="eggNOG" id="KOG3432">
    <property type="taxonomic scope" value="Eukaryota"/>
</dbReference>
<dbReference type="HOGENOM" id="CLU_135754_0_0_1"/>
<dbReference type="InParanoid" id="O44091"/>
<dbReference type="OMA" id="IIICQHI"/>
<dbReference type="PhylomeDB" id="O44091"/>
<dbReference type="Proteomes" id="UP000001819">
    <property type="component" value="Chromosome 3"/>
</dbReference>
<dbReference type="Bgee" id="FBgn0023293">
    <property type="expression patterns" value="Expressed in insect adult head and 2 other cell types or tissues"/>
</dbReference>
<dbReference type="GO" id="GO:0033180">
    <property type="term" value="C:proton-transporting V-type ATPase, V1 domain"/>
    <property type="evidence" value="ECO:0007669"/>
    <property type="project" value="InterPro"/>
</dbReference>
<dbReference type="GO" id="GO:0046961">
    <property type="term" value="F:proton-transporting ATPase activity, rotational mechanism"/>
    <property type="evidence" value="ECO:0007669"/>
    <property type="project" value="InterPro"/>
</dbReference>
<dbReference type="FunFam" id="3.40.50.10580:FF:000001">
    <property type="entry name" value="V-type proton ATPase subunit F"/>
    <property type="match status" value="1"/>
</dbReference>
<dbReference type="Gene3D" id="3.40.50.10580">
    <property type="entry name" value="ATPase, V1 complex, subunit F"/>
    <property type="match status" value="1"/>
</dbReference>
<dbReference type="InterPro" id="IPR008218">
    <property type="entry name" value="ATPase_V1-cplx_f_g_su"/>
</dbReference>
<dbReference type="InterPro" id="IPR005772">
    <property type="entry name" value="ATPase_V1-cplx_fsu_euk"/>
</dbReference>
<dbReference type="InterPro" id="IPR036906">
    <property type="entry name" value="ATPase_V1_fsu_sf"/>
</dbReference>
<dbReference type="NCBIfam" id="TIGR01101">
    <property type="entry name" value="V_ATP_synt_F"/>
    <property type="match status" value="1"/>
</dbReference>
<dbReference type="PANTHER" id="PTHR13861:SF2">
    <property type="entry name" value="V-TYPE PROTON ATPASE SUBUNIT F"/>
    <property type="match status" value="1"/>
</dbReference>
<dbReference type="PANTHER" id="PTHR13861">
    <property type="entry name" value="VACUOLAR ATP SYNTHASE SUBUNIT F"/>
    <property type="match status" value="1"/>
</dbReference>
<dbReference type="Pfam" id="PF01990">
    <property type="entry name" value="ATP-synt_F"/>
    <property type="match status" value="1"/>
</dbReference>
<dbReference type="PIRSF" id="PIRSF015945">
    <property type="entry name" value="ATPase_V1_F_euk"/>
    <property type="match status" value="1"/>
</dbReference>
<dbReference type="SUPFAM" id="SSF159468">
    <property type="entry name" value="AtpF-like"/>
    <property type="match status" value="1"/>
</dbReference>
<reference key="1">
    <citation type="journal article" date="2005" name="Genome Res.">
        <title>Comparative genome sequencing of Drosophila pseudoobscura: chromosomal, gene, and cis-element evolution.</title>
        <authorList>
            <person name="Richards S."/>
            <person name="Liu Y."/>
            <person name="Bettencourt B.R."/>
            <person name="Hradecky P."/>
            <person name="Letovsky S."/>
            <person name="Nielsen R."/>
            <person name="Thornton K."/>
            <person name="Hubisz M.J."/>
            <person name="Chen R."/>
            <person name="Meisel R.P."/>
            <person name="Couronne O."/>
            <person name="Hua S."/>
            <person name="Smith M.A."/>
            <person name="Zhang P."/>
            <person name="Liu J."/>
            <person name="Bussemaker H.J."/>
            <person name="van Batenburg M.F."/>
            <person name="Howells S.L."/>
            <person name="Scherer S.E."/>
            <person name="Sodergren E."/>
            <person name="Matthews B.B."/>
            <person name="Crosby M.A."/>
            <person name="Schroeder A.J."/>
            <person name="Ortiz-Barrientos D."/>
            <person name="Rives C.M."/>
            <person name="Metzker M.L."/>
            <person name="Muzny D.M."/>
            <person name="Scott G."/>
            <person name="Steffen D."/>
            <person name="Wheeler D.A."/>
            <person name="Worley K.C."/>
            <person name="Havlak P."/>
            <person name="Durbin K.J."/>
            <person name="Egan A."/>
            <person name="Gill R."/>
            <person name="Hume J."/>
            <person name="Morgan M.B."/>
            <person name="Miner G."/>
            <person name="Hamilton C."/>
            <person name="Huang Y."/>
            <person name="Waldron L."/>
            <person name="Verduzco D."/>
            <person name="Clerc-Blankenburg K.P."/>
            <person name="Dubchak I."/>
            <person name="Noor M.A.F."/>
            <person name="Anderson W."/>
            <person name="White K.P."/>
            <person name="Clark A.G."/>
            <person name="Schaeffer S.W."/>
            <person name="Gelbart W.M."/>
            <person name="Weinstock G.M."/>
            <person name="Gibbs R.A."/>
        </authorList>
    </citation>
    <scope>NUCLEOTIDE SEQUENCE [LARGE SCALE GENOMIC DNA]</scope>
    <source>
        <strain>MV2-25 / Tucson 14011-0121.94</strain>
    </source>
</reference>
<reference key="2">
    <citation type="journal article" date="1998" name="Genetica">
        <title>The molecular clock revisited: the rate of synonymous vs. replacement change in Drosophila.</title>
        <authorList>
            <person name="Zeng L.-W."/>
            <person name="Comeron J.M."/>
            <person name="Chen B."/>
            <person name="Kreitman M."/>
        </authorList>
    </citation>
    <scope>NUCLEOTIDE SEQUENCE [MRNA] OF 17-106</scope>
</reference>
<feature type="chain" id="PRO_0000144806" description="V-type proton ATPase subunit F 1">
    <location>
        <begin position="1"/>
        <end position="124"/>
    </location>
</feature>
<name>VATF1_DROPS</name>
<proteinExistence type="evidence at transcript level"/>
<accession>O44091</accession>
<accession>Q28WK2</accession>
<sequence>MALHSAIKGKLISVIGDEDTCVGFLLGGVGEINKNRHPNFMVVDKNTPVSELEDCFKRFLKRDDIDIILINQNCAELIRHVIDAHTSPVPAVLEIPSKDHPYDASKDSILRRARGMFNPEDLVR</sequence>
<gene>
    <name type="primary">Vha14</name>
    <name type="ORF">GA20901</name>
</gene>
<comment type="function">
    <text evidence="1 2">Subunit of the V1 complex of vacuolar(H+)-ATPase (V-ATPase), a multisubunit enzyme composed of a peripheral complex (V1) that hydrolyzes ATP and a membrane integral complex (V0) that translocates protons (By similarity). V-ATPase is responsible for acidifying and maintaining the pH of intracellular compartments and in some cell types, is targeted to the plasma membrane, where it is responsible for acidifying the extracellular environment (By similarity).</text>
</comment>
<comment type="subunit">
    <text evidence="1">V-ATPase is a heteromultimeric enzyme made up of two complexes: the ATP-hydrolytic V1 complex and the proton translocation V0 complex (By similarity). The V1 complex consists of three catalytic AB heterodimers that form a heterohexamer, three peripheral stalks each consisting of EG heterodimers, one central rotor including subunits D and F, and the regulatory subunits C and H (By similarity). The proton translocation complex V0 consists of the proton transport subunit a, a ring of proteolipid subunits c9c'', rotary subunit d, subunits e and f, and the accessory subunits VhaAC45 and ATP6AP2 (By similarity).</text>
</comment>
<comment type="similarity">
    <text evidence="3">Belongs to the V-ATPase F subunit family.</text>
</comment>
<organism>
    <name type="scientific">Drosophila pseudoobscura pseudoobscura</name>
    <name type="common">Fruit fly</name>
    <dbReference type="NCBI Taxonomy" id="46245"/>
    <lineage>
        <taxon>Eukaryota</taxon>
        <taxon>Metazoa</taxon>
        <taxon>Ecdysozoa</taxon>
        <taxon>Arthropoda</taxon>
        <taxon>Hexapoda</taxon>
        <taxon>Insecta</taxon>
        <taxon>Pterygota</taxon>
        <taxon>Neoptera</taxon>
        <taxon>Endopterygota</taxon>
        <taxon>Diptera</taxon>
        <taxon>Brachycera</taxon>
        <taxon>Muscomorpha</taxon>
        <taxon>Ephydroidea</taxon>
        <taxon>Drosophilidae</taxon>
        <taxon>Drosophila</taxon>
        <taxon>Sophophora</taxon>
    </lineage>
</organism>
<evidence type="ECO:0000250" key="1">
    <source>
        <dbReference type="UniProtKB" id="Q16864"/>
    </source>
</evidence>
<evidence type="ECO:0000250" key="2">
    <source>
        <dbReference type="UniProtKB" id="Q28029"/>
    </source>
</evidence>
<evidence type="ECO:0000305" key="3"/>
<protein>
    <recommendedName>
        <fullName>V-type proton ATPase subunit F 1</fullName>
        <shortName>V-ATPase subunit F 1</shortName>
    </recommendedName>
    <alternativeName>
        <fullName>V-ATPase 14 kDa subunit</fullName>
    </alternativeName>
    <alternativeName>
        <fullName>Vacuolar proton pump subunit F 1</fullName>
    </alternativeName>
</protein>
<keyword id="KW-0375">Hydrogen ion transport</keyword>
<keyword id="KW-0406">Ion transport</keyword>
<keyword id="KW-1185">Reference proteome</keyword>
<keyword id="KW-0813">Transport</keyword>